<comment type="function">
    <text evidence="1">One of the early assembly proteins it binds 23S rRNA. One of the proteins that surrounds the polypeptide exit tunnel on the outside of the ribosome. Forms the main docking site for trigger factor binding to the ribosome.</text>
</comment>
<comment type="subunit">
    <text evidence="1">Part of the 50S ribosomal subunit. Contacts protein L29, and trigger factor when it is bound to the ribosome.</text>
</comment>
<comment type="similarity">
    <text evidence="1">Belongs to the universal ribosomal protein uL23 family.</text>
</comment>
<evidence type="ECO:0000255" key="1">
    <source>
        <dbReference type="HAMAP-Rule" id="MF_01369"/>
    </source>
</evidence>
<evidence type="ECO:0000305" key="2"/>
<reference key="1">
    <citation type="submission" date="2007-11" db="EMBL/GenBank/DDBJ databases">
        <title>The genome sequence of the hyperthermophilic bacterium Thermotoga neapolitana.</title>
        <authorList>
            <person name="Lim S.K."/>
            <person name="Kim J.S."/>
            <person name="Cha S.H."/>
            <person name="Park B.C."/>
            <person name="Lee D.S."/>
            <person name="Tae H.S."/>
            <person name="Kim S.-J."/>
            <person name="Kim J.J."/>
            <person name="Park K.J."/>
            <person name="Lee S.Y."/>
        </authorList>
    </citation>
    <scope>NUCLEOTIDE SEQUENCE [LARGE SCALE GENOMIC DNA]</scope>
    <source>
        <strain>ATCC 49049 / DSM 4359 / NBRC 107923 / NS-E</strain>
    </source>
</reference>
<sequence>MKQEKLSLHDVLVRPIITEKALRLREQRKYVFEVNPLANKNQIKEAVEKIFNVKVDKVNVINMKPKPKRRGIFEGRTRSWKKAVVTLKEGYTIKELEGEH</sequence>
<organism>
    <name type="scientific">Thermotoga neapolitana (strain ATCC 49049 / DSM 4359 / NBRC 107923 / NS-E)</name>
    <dbReference type="NCBI Taxonomy" id="309803"/>
    <lineage>
        <taxon>Bacteria</taxon>
        <taxon>Thermotogati</taxon>
        <taxon>Thermotogota</taxon>
        <taxon>Thermotogae</taxon>
        <taxon>Thermotogales</taxon>
        <taxon>Thermotogaceae</taxon>
        <taxon>Thermotoga</taxon>
    </lineage>
</organism>
<feature type="chain" id="PRO_1000184111" description="Large ribosomal subunit protein uL23">
    <location>
        <begin position="1"/>
        <end position="100"/>
    </location>
</feature>
<proteinExistence type="inferred from homology"/>
<accession>B9K888</accession>
<keyword id="KW-0687">Ribonucleoprotein</keyword>
<keyword id="KW-0689">Ribosomal protein</keyword>
<keyword id="KW-0694">RNA-binding</keyword>
<keyword id="KW-0699">rRNA-binding</keyword>
<dbReference type="EMBL" id="CP000916">
    <property type="protein sequence ID" value="ACM23171.1"/>
    <property type="molecule type" value="Genomic_DNA"/>
</dbReference>
<dbReference type="RefSeq" id="WP_015919488.1">
    <property type="nucleotide sequence ID" value="NC_011978.1"/>
</dbReference>
<dbReference type="SMR" id="B9K888"/>
<dbReference type="STRING" id="309803.CTN_0995"/>
<dbReference type="KEGG" id="tna:CTN_0995"/>
<dbReference type="eggNOG" id="COG0089">
    <property type="taxonomic scope" value="Bacteria"/>
</dbReference>
<dbReference type="HOGENOM" id="CLU_037562_3_2_0"/>
<dbReference type="Proteomes" id="UP000000445">
    <property type="component" value="Chromosome"/>
</dbReference>
<dbReference type="GO" id="GO:1990904">
    <property type="term" value="C:ribonucleoprotein complex"/>
    <property type="evidence" value="ECO:0007669"/>
    <property type="project" value="UniProtKB-KW"/>
</dbReference>
<dbReference type="GO" id="GO:0005840">
    <property type="term" value="C:ribosome"/>
    <property type="evidence" value="ECO:0007669"/>
    <property type="project" value="UniProtKB-KW"/>
</dbReference>
<dbReference type="GO" id="GO:0019843">
    <property type="term" value="F:rRNA binding"/>
    <property type="evidence" value="ECO:0007669"/>
    <property type="project" value="UniProtKB-UniRule"/>
</dbReference>
<dbReference type="GO" id="GO:0003735">
    <property type="term" value="F:structural constituent of ribosome"/>
    <property type="evidence" value="ECO:0007669"/>
    <property type="project" value="InterPro"/>
</dbReference>
<dbReference type="GO" id="GO:0006412">
    <property type="term" value="P:translation"/>
    <property type="evidence" value="ECO:0007669"/>
    <property type="project" value="UniProtKB-UniRule"/>
</dbReference>
<dbReference type="FunFam" id="3.30.70.330:FF:000001">
    <property type="entry name" value="50S ribosomal protein L23"/>
    <property type="match status" value="1"/>
</dbReference>
<dbReference type="Gene3D" id="3.30.70.330">
    <property type="match status" value="1"/>
</dbReference>
<dbReference type="HAMAP" id="MF_01369_B">
    <property type="entry name" value="Ribosomal_uL23_B"/>
    <property type="match status" value="1"/>
</dbReference>
<dbReference type="InterPro" id="IPR012677">
    <property type="entry name" value="Nucleotide-bd_a/b_plait_sf"/>
</dbReference>
<dbReference type="InterPro" id="IPR013025">
    <property type="entry name" value="Ribosomal_uL23-like"/>
</dbReference>
<dbReference type="InterPro" id="IPR012678">
    <property type="entry name" value="Ribosomal_uL23/eL15/eS24_sf"/>
</dbReference>
<dbReference type="InterPro" id="IPR001014">
    <property type="entry name" value="Ribosomal_uL23_CS"/>
</dbReference>
<dbReference type="NCBIfam" id="NF004363">
    <property type="entry name" value="PRK05738.2-4"/>
    <property type="match status" value="1"/>
</dbReference>
<dbReference type="NCBIfam" id="NF004366">
    <property type="entry name" value="PRK05738.3-2"/>
    <property type="match status" value="1"/>
</dbReference>
<dbReference type="PANTHER" id="PTHR11620">
    <property type="entry name" value="60S RIBOSOMAL PROTEIN L23A"/>
    <property type="match status" value="1"/>
</dbReference>
<dbReference type="Pfam" id="PF00276">
    <property type="entry name" value="Ribosomal_L23"/>
    <property type="match status" value="1"/>
</dbReference>
<dbReference type="SUPFAM" id="SSF54189">
    <property type="entry name" value="Ribosomal proteins S24e, L23 and L15e"/>
    <property type="match status" value="1"/>
</dbReference>
<dbReference type="PROSITE" id="PS00050">
    <property type="entry name" value="RIBOSOMAL_L23"/>
    <property type="match status" value="1"/>
</dbReference>
<gene>
    <name evidence="1" type="primary">rplW</name>
    <name type="ordered locus">CTN_0995</name>
</gene>
<protein>
    <recommendedName>
        <fullName evidence="1">Large ribosomal subunit protein uL23</fullName>
    </recommendedName>
    <alternativeName>
        <fullName evidence="2">50S ribosomal protein L23</fullName>
    </alternativeName>
</protein>
<name>RL23_THENN</name>